<gene>
    <name evidence="1" type="primary">thyA</name>
    <name type="ordered locus">CC_2124</name>
</gene>
<evidence type="ECO:0000255" key="1">
    <source>
        <dbReference type="HAMAP-Rule" id="MF_00008"/>
    </source>
</evidence>
<name>TYSY_CAUVC</name>
<accession>Q9A6H0</accession>
<organism>
    <name type="scientific">Caulobacter vibrioides (strain ATCC 19089 / CIP 103742 / CB 15)</name>
    <name type="common">Caulobacter crescentus</name>
    <dbReference type="NCBI Taxonomy" id="190650"/>
    <lineage>
        <taxon>Bacteria</taxon>
        <taxon>Pseudomonadati</taxon>
        <taxon>Pseudomonadota</taxon>
        <taxon>Alphaproteobacteria</taxon>
        <taxon>Caulobacterales</taxon>
        <taxon>Caulobacteraceae</taxon>
        <taxon>Caulobacter</taxon>
    </lineage>
</organism>
<feature type="chain" id="PRO_0000140947" description="Thymidylate synthase">
    <location>
        <begin position="1"/>
        <end position="279"/>
    </location>
</feature>
<feature type="active site" description="Nucleophile" evidence="1">
    <location>
        <position position="162"/>
    </location>
</feature>
<feature type="binding site" description="in other chain" evidence="1">
    <location>
        <position position="37"/>
    </location>
    <ligand>
        <name>dUMP</name>
        <dbReference type="ChEBI" id="CHEBI:246422"/>
        <note>ligand shared between dimeric partners</note>
    </ligand>
</feature>
<feature type="binding site" evidence="1">
    <location>
        <position position="67"/>
    </location>
    <ligand>
        <name>(6R)-5,10-methylene-5,6,7,8-tetrahydrofolate</name>
        <dbReference type="ChEBI" id="CHEBI:15636"/>
    </ligand>
</feature>
<feature type="binding site" evidence="1">
    <location>
        <begin position="142"/>
        <end position="143"/>
    </location>
    <ligand>
        <name>dUMP</name>
        <dbReference type="ChEBI" id="CHEBI:246422"/>
        <note>ligand shared between dimeric partners</note>
    </ligand>
</feature>
<feature type="binding site" description="in other chain" evidence="1">
    <location>
        <begin position="182"/>
        <end position="185"/>
    </location>
    <ligand>
        <name>dUMP</name>
        <dbReference type="ChEBI" id="CHEBI:246422"/>
        <note>ligand shared between dimeric partners</note>
    </ligand>
</feature>
<feature type="binding site" evidence="1">
    <location>
        <position position="185"/>
    </location>
    <ligand>
        <name>(6R)-5,10-methylene-5,6,7,8-tetrahydrofolate</name>
        <dbReference type="ChEBI" id="CHEBI:15636"/>
    </ligand>
</feature>
<feature type="binding site" description="in other chain" evidence="1">
    <location>
        <position position="193"/>
    </location>
    <ligand>
        <name>dUMP</name>
        <dbReference type="ChEBI" id="CHEBI:246422"/>
        <note>ligand shared between dimeric partners</note>
    </ligand>
</feature>
<feature type="binding site" description="in other chain" evidence="1">
    <location>
        <begin position="223"/>
        <end position="225"/>
    </location>
    <ligand>
        <name>dUMP</name>
        <dbReference type="ChEBI" id="CHEBI:246422"/>
        <note>ligand shared between dimeric partners</note>
    </ligand>
</feature>
<feature type="binding site" evidence="1">
    <location>
        <position position="278"/>
    </location>
    <ligand>
        <name>(6R)-5,10-methylene-5,6,7,8-tetrahydrofolate</name>
        <dbReference type="ChEBI" id="CHEBI:15636"/>
    </ligand>
</feature>
<sequence>MSTAVLDAPKAATDHPERQYLTLLADILENGVQRGDRTGTGTLGVFGRQIRFDLAKGFPVLTTKKLHLRSIIIELLWFLKGDTNIAYLKDNGVRIWDEWADENGDLGPVYGKQWRSWATPDGRVIDQISALVENLKANPNSRRHIVTAWNPADVDDMALPPCHCLFQFFVADGKLSCQLYQRSADVFLGVPFNIASYALLTLMVAKVVGLEPGEFVHTFGDAHLYLNHLDQAREQLTREPFDFPTMKIADKRDLFGFEYEDFTLEGYQAHPHIKAEVSV</sequence>
<reference key="1">
    <citation type="journal article" date="2001" name="Proc. Natl. Acad. Sci. U.S.A.">
        <title>Complete genome sequence of Caulobacter crescentus.</title>
        <authorList>
            <person name="Nierman W.C."/>
            <person name="Feldblyum T.V."/>
            <person name="Laub M.T."/>
            <person name="Paulsen I.T."/>
            <person name="Nelson K.E."/>
            <person name="Eisen J.A."/>
            <person name="Heidelberg J.F."/>
            <person name="Alley M.R.K."/>
            <person name="Ohta N."/>
            <person name="Maddock J.R."/>
            <person name="Potocka I."/>
            <person name="Nelson W.C."/>
            <person name="Newton A."/>
            <person name="Stephens C."/>
            <person name="Phadke N.D."/>
            <person name="Ely B."/>
            <person name="DeBoy R.T."/>
            <person name="Dodson R.J."/>
            <person name="Durkin A.S."/>
            <person name="Gwinn M.L."/>
            <person name="Haft D.H."/>
            <person name="Kolonay J.F."/>
            <person name="Smit J."/>
            <person name="Craven M.B."/>
            <person name="Khouri H.M."/>
            <person name="Shetty J."/>
            <person name="Berry K.J."/>
            <person name="Utterback T.R."/>
            <person name="Tran K."/>
            <person name="Wolf A.M."/>
            <person name="Vamathevan J.J."/>
            <person name="Ermolaeva M.D."/>
            <person name="White O."/>
            <person name="Salzberg S.L."/>
            <person name="Venter J.C."/>
            <person name="Shapiro L."/>
            <person name="Fraser C.M."/>
        </authorList>
    </citation>
    <scope>NUCLEOTIDE SEQUENCE [LARGE SCALE GENOMIC DNA]</scope>
    <source>
        <strain>ATCC 19089 / CIP 103742 / CB 15</strain>
    </source>
</reference>
<proteinExistence type="inferred from homology"/>
<dbReference type="EC" id="2.1.1.45" evidence="1"/>
<dbReference type="EMBL" id="AE005673">
    <property type="protein sequence ID" value="AAK24095.1"/>
    <property type="molecule type" value="Genomic_DNA"/>
</dbReference>
<dbReference type="PIR" id="C87512">
    <property type="entry name" value="C87512"/>
</dbReference>
<dbReference type="RefSeq" id="NP_420927.1">
    <property type="nucleotide sequence ID" value="NC_002696.2"/>
</dbReference>
<dbReference type="RefSeq" id="WP_010919985.1">
    <property type="nucleotide sequence ID" value="NC_002696.2"/>
</dbReference>
<dbReference type="SMR" id="Q9A6H0"/>
<dbReference type="STRING" id="190650.CC_2124"/>
<dbReference type="EnsemblBacteria" id="AAK24095">
    <property type="protein sequence ID" value="AAK24095"/>
    <property type="gene ID" value="CC_2124"/>
</dbReference>
<dbReference type="KEGG" id="ccr:CC_2124"/>
<dbReference type="PATRIC" id="fig|190650.5.peg.2144"/>
<dbReference type="eggNOG" id="COG0207">
    <property type="taxonomic scope" value="Bacteria"/>
</dbReference>
<dbReference type="HOGENOM" id="CLU_021669_0_0_5"/>
<dbReference type="BioCyc" id="CAULO:CC2124-MONOMER"/>
<dbReference type="UniPathway" id="UPA00575"/>
<dbReference type="Proteomes" id="UP000001816">
    <property type="component" value="Chromosome"/>
</dbReference>
<dbReference type="GO" id="GO:0005829">
    <property type="term" value="C:cytosol"/>
    <property type="evidence" value="ECO:0007669"/>
    <property type="project" value="TreeGrafter"/>
</dbReference>
<dbReference type="GO" id="GO:0004799">
    <property type="term" value="F:thymidylate synthase activity"/>
    <property type="evidence" value="ECO:0007669"/>
    <property type="project" value="UniProtKB-UniRule"/>
</dbReference>
<dbReference type="GO" id="GO:0006231">
    <property type="term" value="P:dTMP biosynthetic process"/>
    <property type="evidence" value="ECO:0007669"/>
    <property type="project" value="UniProtKB-UniRule"/>
</dbReference>
<dbReference type="GO" id="GO:0006235">
    <property type="term" value="P:dTTP biosynthetic process"/>
    <property type="evidence" value="ECO:0007669"/>
    <property type="project" value="UniProtKB-UniRule"/>
</dbReference>
<dbReference type="GO" id="GO:0032259">
    <property type="term" value="P:methylation"/>
    <property type="evidence" value="ECO:0007669"/>
    <property type="project" value="UniProtKB-KW"/>
</dbReference>
<dbReference type="CDD" id="cd00351">
    <property type="entry name" value="TS_Pyrimidine_HMase"/>
    <property type="match status" value="1"/>
</dbReference>
<dbReference type="FunFam" id="3.30.572.10:FF:000013">
    <property type="entry name" value="Thymidylate synthase"/>
    <property type="match status" value="1"/>
</dbReference>
<dbReference type="Gene3D" id="3.30.572.10">
    <property type="entry name" value="Thymidylate synthase/dCMP hydroxymethylase domain"/>
    <property type="match status" value="1"/>
</dbReference>
<dbReference type="HAMAP" id="MF_00008">
    <property type="entry name" value="Thymidy_synth_bact"/>
    <property type="match status" value="1"/>
</dbReference>
<dbReference type="InterPro" id="IPR045097">
    <property type="entry name" value="Thymidate_synth/dCMP_Mease"/>
</dbReference>
<dbReference type="InterPro" id="IPR023451">
    <property type="entry name" value="Thymidate_synth/dCMP_Mease_dom"/>
</dbReference>
<dbReference type="InterPro" id="IPR036926">
    <property type="entry name" value="Thymidate_synth/dCMP_Mease_sf"/>
</dbReference>
<dbReference type="InterPro" id="IPR000398">
    <property type="entry name" value="Thymidylate_synthase"/>
</dbReference>
<dbReference type="InterPro" id="IPR020940">
    <property type="entry name" value="Thymidylate_synthase_AS"/>
</dbReference>
<dbReference type="NCBIfam" id="NF002497">
    <property type="entry name" value="PRK01827.1-3"/>
    <property type="match status" value="1"/>
</dbReference>
<dbReference type="NCBIfam" id="NF002499">
    <property type="entry name" value="PRK01827.1-5"/>
    <property type="match status" value="1"/>
</dbReference>
<dbReference type="NCBIfam" id="TIGR03284">
    <property type="entry name" value="thym_sym"/>
    <property type="match status" value="2"/>
</dbReference>
<dbReference type="PANTHER" id="PTHR11548:SF9">
    <property type="entry name" value="THYMIDYLATE SYNTHASE"/>
    <property type="match status" value="1"/>
</dbReference>
<dbReference type="PANTHER" id="PTHR11548">
    <property type="entry name" value="THYMIDYLATE SYNTHASE 1"/>
    <property type="match status" value="1"/>
</dbReference>
<dbReference type="Pfam" id="PF00303">
    <property type="entry name" value="Thymidylat_synt"/>
    <property type="match status" value="1"/>
</dbReference>
<dbReference type="PRINTS" id="PR00108">
    <property type="entry name" value="THYMDSNTHASE"/>
</dbReference>
<dbReference type="SUPFAM" id="SSF55831">
    <property type="entry name" value="Thymidylate synthase/dCMP hydroxymethylase"/>
    <property type="match status" value="1"/>
</dbReference>
<dbReference type="PROSITE" id="PS00091">
    <property type="entry name" value="THYMIDYLATE_SYNTHASE"/>
    <property type="match status" value="1"/>
</dbReference>
<comment type="function">
    <text evidence="1">Catalyzes the reductive methylation of 2'-deoxyuridine-5'-monophosphate (dUMP) to 2'-deoxythymidine-5'-monophosphate (dTMP) while utilizing 5,10-methylenetetrahydrofolate (mTHF) as the methyl donor and reductant in the reaction, yielding dihydrofolate (DHF) as a by-product. This enzymatic reaction provides an intracellular de novo source of dTMP, an essential precursor for DNA biosynthesis.</text>
</comment>
<comment type="catalytic activity">
    <reaction evidence="1">
        <text>dUMP + (6R)-5,10-methylene-5,6,7,8-tetrahydrofolate = 7,8-dihydrofolate + dTMP</text>
        <dbReference type="Rhea" id="RHEA:12104"/>
        <dbReference type="ChEBI" id="CHEBI:15636"/>
        <dbReference type="ChEBI" id="CHEBI:57451"/>
        <dbReference type="ChEBI" id="CHEBI:63528"/>
        <dbReference type="ChEBI" id="CHEBI:246422"/>
        <dbReference type="EC" id="2.1.1.45"/>
    </reaction>
</comment>
<comment type="pathway">
    <text evidence="1">Pyrimidine metabolism; dTTP biosynthesis.</text>
</comment>
<comment type="subunit">
    <text evidence="1">Homodimer.</text>
</comment>
<comment type="subcellular location">
    <subcellularLocation>
        <location evidence="1">Cytoplasm</location>
    </subcellularLocation>
</comment>
<comment type="similarity">
    <text evidence="1">Belongs to the thymidylate synthase family. Bacterial-type ThyA subfamily.</text>
</comment>
<keyword id="KW-0963">Cytoplasm</keyword>
<keyword id="KW-0489">Methyltransferase</keyword>
<keyword id="KW-0545">Nucleotide biosynthesis</keyword>
<keyword id="KW-1185">Reference proteome</keyword>
<keyword id="KW-0808">Transferase</keyword>
<protein>
    <recommendedName>
        <fullName evidence="1">Thymidylate synthase</fullName>
        <shortName evidence="1">TS</shortName>
        <shortName evidence="1">TSase</shortName>
        <ecNumber evidence="1">2.1.1.45</ecNumber>
    </recommendedName>
</protein>